<keyword id="KW-1157">Cap snatching</keyword>
<keyword id="KW-1262">Eukaryotic host gene expression shutoff by virus</keyword>
<keyword id="KW-1191">Eukaryotic host transcription shutoff by virus</keyword>
<keyword id="KW-1190">Host gene expression shutoff by virus</keyword>
<keyword id="KW-1045">Host mitochondrion</keyword>
<keyword id="KW-1048">Host nucleus</keyword>
<keyword id="KW-0945">Host-virus interaction</keyword>
<keyword id="KW-1090">Inhibition of host innate immune response by virus</keyword>
<keyword id="KW-1097">Inhibition of host MAVS by virus</keyword>
<keyword id="KW-1113">Inhibition of host RLR pathway by virus</keyword>
<keyword id="KW-1104">Inhibition of host RNA polymerase II by virus</keyword>
<keyword id="KW-0506">mRNA capping</keyword>
<keyword id="KW-0507">mRNA processing</keyword>
<keyword id="KW-0899">Viral immunoevasion</keyword>
<keyword id="KW-1195">Viral transcription</keyword>
<keyword id="KW-0946">Virion</keyword>
<dbReference type="EMBL" id="M73513">
    <property type="protein sequence ID" value="AAA43125.1"/>
    <property type="molecule type" value="Genomic_RNA"/>
</dbReference>
<dbReference type="SMR" id="P26114"/>
<dbReference type="GO" id="GO:0033650">
    <property type="term" value="C:host cell mitochondrion"/>
    <property type="evidence" value="ECO:0007669"/>
    <property type="project" value="UniProtKB-SubCell"/>
</dbReference>
<dbReference type="GO" id="GO:0042025">
    <property type="term" value="C:host cell nucleus"/>
    <property type="evidence" value="ECO:0007669"/>
    <property type="project" value="UniProtKB-SubCell"/>
</dbReference>
<dbReference type="GO" id="GO:0044423">
    <property type="term" value="C:virion component"/>
    <property type="evidence" value="ECO:0007669"/>
    <property type="project" value="UniProtKB-UniRule"/>
</dbReference>
<dbReference type="GO" id="GO:0003723">
    <property type="term" value="F:RNA binding"/>
    <property type="evidence" value="ECO:0007669"/>
    <property type="project" value="UniProtKB-UniRule"/>
</dbReference>
<dbReference type="GO" id="GO:0003968">
    <property type="term" value="F:RNA-directed RNA polymerase activity"/>
    <property type="evidence" value="ECO:0007669"/>
    <property type="project" value="UniProtKB-UniRule"/>
</dbReference>
<dbReference type="GO" id="GO:0006370">
    <property type="term" value="P:7-methylguanosine mRNA capping"/>
    <property type="evidence" value="ECO:0007669"/>
    <property type="project" value="UniProtKB-UniRule"/>
</dbReference>
<dbReference type="GO" id="GO:0075526">
    <property type="term" value="P:cap snatching"/>
    <property type="evidence" value="ECO:0007669"/>
    <property type="project" value="UniProtKB-UniRule"/>
</dbReference>
<dbReference type="GO" id="GO:0006351">
    <property type="term" value="P:DNA-templated transcription"/>
    <property type="evidence" value="ECO:0007669"/>
    <property type="project" value="UniProtKB-UniRule"/>
</dbReference>
<dbReference type="GO" id="GO:0039545">
    <property type="term" value="P:symbiont-mediated suppression of host cytoplasmic pattern recognition receptor signaling pathway via inhibition of MAVS activity"/>
    <property type="evidence" value="ECO:0007669"/>
    <property type="project" value="UniProtKB-UniRule"/>
</dbReference>
<dbReference type="GO" id="GO:0039657">
    <property type="term" value="P:symbiont-mediated suppression of host gene expression"/>
    <property type="evidence" value="ECO:0007669"/>
    <property type="project" value="UniProtKB-KW"/>
</dbReference>
<dbReference type="GO" id="GO:0039523">
    <property type="term" value="P:symbiont-mediated suppression of host mRNA transcription via inhibition of RNA polymerase II activity"/>
    <property type="evidence" value="ECO:0007669"/>
    <property type="project" value="UniProtKB-UniRule"/>
</dbReference>
<dbReference type="GO" id="GO:0039694">
    <property type="term" value="P:viral RNA genome replication"/>
    <property type="evidence" value="ECO:0007669"/>
    <property type="project" value="InterPro"/>
</dbReference>
<dbReference type="Gene3D" id="3.30.30.90">
    <property type="entry name" value="Polymerase Basic Protein 2, C-terminal domain"/>
    <property type="match status" value="1"/>
</dbReference>
<dbReference type="HAMAP" id="MF_04062">
    <property type="entry name" value="INV_PB2"/>
    <property type="match status" value="1"/>
</dbReference>
<dbReference type="InterPro" id="IPR049110">
    <property type="entry name" value="Flu_PB2_2nd"/>
</dbReference>
<dbReference type="InterPro" id="IPR049114">
    <property type="entry name" value="Flu_PB2_6th"/>
</dbReference>
<dbReference type="InterPro" id="IPR049115">
    <property type="entry name" value="Flu_PB2_C"/>
</dbReference>
<dbReference type="InterPro" id="IPR048298">
    <property type="entry name" value="Flu_PB2_CAP-bd"/>
</dbReference>
<dbReference type="InterPro" id="IPR049111">
    <property type="entry name" value="Flu_PB2_middle"/>
</dbReference>
<dbReference type="InterPro" id="IPR049106">
    <property type="entry name" value="Flu_PB2_N"/>
</dbReference>
<dbReference type="InterPro" id="IPR001591">
    <property type="entry name" value="INV_PB2"/>
</dbReference>
<dbReference type="InterPro" id="IPR049113">
    <property type="entry name" value="PB2_helical"/>
</dbReference>
<dbReference type="InterPro" id="IPR037258">
    <property type="entry name" value="PDB2_C"/>
</dbReference>
<dbReference type="Pfam" id="PF20947">
    <property type="entry name" value="Flu_PB2_1st"/>
    <property type="match status" value="1"/>
</dbReference>
<dbReference type="Pfam" id="PF20948">
    <property type="entry name" value="Flu_PB2_2nd"/>
    <property type="match status" value="1"/>
</dbReference>
<dbReference type="Pfam" id="PF20949">
    <property type="entry name" value="Flu_PB2_3rd"/>
    <property type="match status" value="1"/>
</dbReference>
<dbReference type="Pfam" id="PF20950">
    <property type="entry name" value="Flu_PB2_4th"/>
    <property type="match status" value="1"/>
</dbReference>
<dbReference type="Pfam" id="PF00604">
    <property type="entry name" value="Flu_PB2_5th"/>
    <property type="match status" value="1"/>
</dbReference>
<dbReference type="Pfam" id="PF20951">
    <property type="entry name" value="Flu_PB2_6th"/>
    <property type="match status" value="1"/>
</dbReference>
<dbReference type="Pfam" id="PF20952">
    <property type="entry name" value="Flu_PB2_7th"/>
    <property type="match status" value="1"/>
</dbReference>
<dbReference type="SUPFAM" id="SSF160453">
    <property type="entry name" value="PB2 C-terminal domain-like"/>
    <property type="match status" value="1"/>
</dbReference>
<proteinExistence type="inferred from homology"/>
<accession>P26114</accession>
<organismHost>
    <name type="scientific">Aves</name>
    <dbReference type="NCBI Taxonomy" id="8782"/>
</organismHost>
<organismHost>
    <name type="scientific">Homo sapiens</name>
    <name type="common">Human</name>
    <dbReference type="NCBI Taxonomy" id="9606"/>
</organismHost>
<organismHost>
    <name type="scientific">Sus scrofa</name>
    <name type="common">Pig</name>
    <dbReference type="NCBI Taxonomy" id="9823"/>
</organismHost>
<feature type="chain" id="PRO_0000078843" description="Polymerase basic protein 2">
    <location>
        <begin position="1"/>
        <end position="759"/>
    </location>
</feature>
<feature type="short sequence motif" description="Nuclear localization signal" evidence="1">
    <location>
        <begin position="736"/>
        <end position="739"/>
    </location>
</feature>
<feature type="site" description="Mammalian adaptation" evidence="1">
    <location>
        <position position="627"/>
    </location>
</feature>
<reference key="1">
    <citation type="journal article" date="1990" name="J. Virol.">
        <title>Evolution of influenza A virus PB2 genes: implications for evolution of the ribonucleoprotein complex and origin of human influenza A virus.</title>
        <authorList>
            <person name="Gorman O.T."/>
            <person name="Donis R.O."/>
            <person name="Kawaoka Y."/>
            <person name="Webster R.G."/>
        </authorList>
    </citation>
    <scope>NUCLEOTIDE SEQUENCE [GENOMIC RNA]</scope>
</reference>
<organism>
    <name type="scientific">Influenza A virus (strain A/Swine/Tennessee/24/1977 H1N1)</name>
    <dbReference type="NCBI Taxonomy" id="385606"/>
    <lineage>
        <taxon>Viruses</taxon>
        <taxon>Riboviria</taxon>
        <taxon>Orthornavirae</taxon>
        <taxon>Negarnaviricota</taxon>
        <taxon>Polyploviricotina</taxon>
        <taxon>Insthoviricetes</taxon>
        <taxon>Articulavirales</taxon>
        <taxon>Orthomyxoviridae</taxon>
        <taxon>Alphainfluenzavirus</taxon>
        <taxon>Alphainfluenzavirus influenzae</taxon>
        <taxon>Influenza A virus</taxon>
    </lineage>
</organism>
<protein>
    <recommendedName>
        <fullName evidence="1">Polymerase basic protein 2</fullName>
    </recommendedName>
    <alternativeName>
        <fullName evidence="1">RNA-directed RNA polymerase subunit P3</fullName>
    </alternativeName>
</protein>
<comment type="function">
    <text evidence="1">Plays an essential role in transcription initiation and cap-stealing mechanism, in which cellular capped pre-mRNAs are used to generate primers for viral transcription. Recognizes and binds the 7-methylguanosine-containing cap of the target pre-RNA which is subsequently cleaved after 10-13 nucleotides by the viral protein PA. Plays a role in the initiation of the viral genome replication and modulates the activity of the ribonucleoprotein (RNP) complex. In addition, participates in the inhibition of type I interferon induction through interaction with and inhibition of the host mitochondrial antiviral signaling protein MAVS.</text>
</comment>
<comment type="subunit">
    <text evidence="1">Influenza RNA polymerase is composed of three subunits: PB1, PB2 and PA. Interacts (via N-terminus) with PB1 (via C-terminus). Interacts with nucleoprotein NP (via N-terminus). Interacts (via N-terminus) with host MAVS (via N-terminus); this interaction inhibits host innate immune response.</text>
</comment>
<comment type="subcellular location">
    <subcellularLocation>
        <location evidence="1">Virion</location>
    </subcellularLocation>
    <subcellularLocation>
        <location evidence="1">Host nucleus</location>
    </subcellularLocation>
    <subcellularLocation>
        <location evidence="1">Host mitochondrion</location>
    </subcellularLocation>
</comment>
<comment type="similarity">
    <text evidence="1">Belongs to the influenza viruses PB2 family.</text>
</comment>
<sequence>MERIKELRNLMSQSRTRGILTRTTVDHMAIIKKYTSGRQEKNPALRMKWMMAMKYPITADKRITETIPERNEQGQTLWSRTSDAGSDRVMVSPLAVTWWNRNGPTASTIHYPKVYRTYFEKVERLKHGTFGPVHFRNQVKIRRRVDINPGHADLSSKEAQDVIMEVVFPNEVGARILTSESQLMITKEKKEELQECKISPLMVAYMLERELVRKTRFLPVAGGTSSVYIEVLHLTQGACWEQLYTPGGEVRNDDVDQSLIIAARSIVRRATVSADPLASLLEMCHSTQIGGVRMVDILKQNPTEEQAVDICKAAMGLRISSSFSFGGFTFKRTSGSSTKREEEVLTGNLQTLKIRVHEGYEEFTMVGKKATAILRKATRRLVQLIVSGRDEQSIAEAIIVAMVFSQEDCVIKAVRGDLNFVNRANQRLNPMHQLLRHFQKDAKILFQNWGIESIDNVMGMIGILPDLTPSTEKSMRGIRISKMGVDEYSSTERVVVSIDRFLRVRDQQGNVLLSPEEVSETQGTEKLTITYSSSMMWEVNGPESVLVNTYQWIIRNWETVKIQWSQDPTMLYNKMEFEPFQSLVPKAARGQYSGFVRTLFQQMRDVLGTFDTVQIIKLLPFAAAPPKQSRMQFSSLTVNVRGSGMRILIRGNSPVFNYNKSTKRLTVLGKDAGALNEDPDEGTAGVESAVLRGFLILGREDRRYGPALSINQLSSLAKGEKANVLIGQGDVVLVMKRKRDSSILTDSQTATKRIRMAIN</sequence>
<name>PB2_I77AC</name>
<evidence type="ECO:0000255" key="1">
    <source>
        <dbReference type="HAMAP-Rule" id="MF_04062"/>
    </source>
</evidence>
<gene>
    <name evidence="1" type="primary">PB2</name>
</gene>